<proteinExistence type="inferred from homology"/>
<accession>Q87MW9</accession>
<keyword id="KW-0997">Cell inner membrane</keyword>
<keyword id="KW-1003">Cell membrane</keyword>
<keyword id="KW-0249">Electron transport</keyword>
<keyword id="KW-0472">Membrane</keyword>
<keyword id="KW-1278">Translocase</keyword>
<keyword id="KW-0812">Transmembrane</keyword>
<keyword id="KW-1133">Transmembrane helix</keyword>
<keyword id="KW-0813">Transport</keyword>
<dbReference type="EC" id="7.-.-.-" evidence="1"/>
<dbReference type="EMBL" id="BA000031">
    <property type="protein sequence ID" value="BAC60370.1"/>
    <property type="molecule type" value="Genomic_DNA"/>
</dbReference>
<dbReference type="RefSeq" id="NP_798486.1">
    <property type="nucleotide sequence ID" value="NC_004603.1"/>
</dbReference>
<dbReference type="RefSeq" id="WP_005480817.1">
    <property type="nucleotide sequence ID" value="NC_004603.1"/>
</dbReference>
<dbReference type="SMR" id="Q87MW9"/>
<dbReference type="GeneID" id="1189619"/>
<dbReference type="KEGG" id="vpa:VP2107"/>
<dbReference type="PATRIC" id="fig|223926.6.peg.2017"/>
<dbReference type="eggNOG" id="COG4660">
    <property type="taxonomic scope" value="Bacteria"/>
</dbReference>
<dbReference type="HOGENOM" id="CLU_046659_1_0_6"/>
<dbReference type="Proteomes" id="UP000002493">
    <property type="component" value="Chromosome 1"/>
</dbReference>
<dbReference type="GO" id="GO:0005886">
    <property type="term" value="C:plasma membrane"/>
    <property type="evidence" value="ECO:0007669"/>
    <property type="project" value="UniProtKB-SubCell"/>
</dbReference>
<dbReference type="GO" id="GO:0022900">
    <property type="term" value="P:electron transport chain"/>
    <property type="evidence" value="ECO:0007669"/>
    <property type="project" value="UniProtKB-UniRule"/>
</dbReference>
<dbReference type="HAMAP" id="MF_00478">
    <property type="entry name" value="RsxE_RnfE"/>
    <property type="match status" value="1"/>
</dbReference>
<dbReference type="InterPro" id="IPR003667">
    <property type="entry name" value="NqrDE/RnfAE"/>
</dbReference>
<dbReference type="InterPro" id="IPR010968">
    <property type="entry name" value="RnfE"/>
</dbReference>
<dbReference type="NCBIfam" id="NF009070">
    <property type="entry name" value="PRK12405.1"/>
    <property type="match status" value="1"/>
</dbReference>
<dbReference type="NCBIfam" id="TIGR01948">
    <property type="entry name" value="rnfE"/>
    <property type="match status" value="1"/>
</dbReference>
<dbReference type="PANTHER" id="PTHR30586">
    <property type="entry name" value="ELECTRON TRANSPORT COMPLEX PROTEIN RNFE"/>
    <property type="match status" value="1"/>
</dbReference>
<dbReference type="PANTHER" id="PTHR30586:SF0">
    <property type="entry name" value="ION-TRANSLOCATING OXIDOREDUCTASE COMPLEX SUBUNIT E"/>
    <property type="match status" value="1"/>
</dbReference>
<dbReference type="Pfam" id="PF02508">
    <property type="entry name" value="Rnf-Nqr"/>
    <property type="match status" value="1"/>
</dbReference>
<dbReference type="PIRSF" id="PIRSF006102">
    <property type="entry name" value="NQR_DE"/>
    <property type="match status" value="1"/>
</dbReference>
<sequence length="230" mass="24583">MSENKQLMKNGMWSNNPALVQLLGLCPLLAVSSTITNALGLGIATLLVLVGSNVTVSLIRNYVPKEIRIPVFVMIIASLVTCVQLLMNAYAYGLYLSLGIFIPLIVTNCIIIGRAEAYASKNDVLPAALDGLWMGLGMTSVLVVLGSMRELIGNGTLFDGADLLLGDWAAALRIQVFQFDSSFLLALLPPGAFIGVGLLIALKNVIDSSIQARQPKEEKPAIERARVTNA</sequence>
<feature type="chain" id="PRO_0000214282" description="Ion-translocating oxidoreductase complex subunit E">
    <location>
        <begin position="1"/>
        <end position="230"/>
    </location>
</feature>
<feature type="transmembrane region" description="Helical" evidence="1">
    <location>
        <begin position="18"/>
        <end position="38"/>
    </location>
</feature>
<feature type="transmembrane region" description="Helical" evidence="1">
    <location>
        <begin position="39"/>
        <end position="59"/>
    </location>
</feature>
<feature type="transmembrane region" description="Helical" evidence="1">
    <location>
        <begin position="69"/>
        <end position="89"/>
    </location>
</feature>
<feature type="transmembrane region" description="Helical" evidence="1">
    <location>
        <begin position="93"/>
        <end position="113"/>
    </location>
</feature>
<feature type="transmembrane region" description="Helical" evidence="1">
    <location>
        <begin position="124"/>
        <end position="144"/>
    </location>
</feature>
<feature type="transmembrane region" description="Helical" evidence="1">
    <location>
        <begin position="182"/>
        <end position="202"/>
    </location>
</feature>
<name>RNFE_VIBPA</name>
<organism>
    <name type="scientific">Vibrio parahaemolyticus serotype O3:K6 (strain RIMD 2210633)</name>
    <dbReference type="NCBI Taxonomy" id="223926"/>
    <lineage>
        <taxon>Bacteria</taxon>
        <taxon>Pseudomonadati</taxon>
        <taxon>Pseudomonadota</taxon>
        <taxon>Gammaproteobacteria</taxon>
        <taxon>Vibrionales</taxon>
        <taxon>Vibrionaceae</taxon>
        <taxon>Vibrio</taxon>
    </lineage>
</organism>
<comment type="function">
    <text evidence="1">Part of a membrane-bound complex that couples electron transfer with translocation of ions across the membrane.</text>
</comment>
<comment type="subunit">
    <text evidence="1">The complex is composed of six subunits: RnfA, RnfB, RnfC, RnfD, RnfE and RnfG.</text>
</comment>
<comment type="subcellular location">
    <subcellularLocation>
        <location evidence="1">Cell inner membrane</location>
        <topology evidence="1">Multi-pass membrane protein</topology>
    </subcellularLocation>
</comment>
<comment type="similarity">
    <text evidence="1">Belongs to the NqrDE/RnfAE family.</text>
</comment>
<evidence type="ECO:0000255" key="1">
    <source>
        <dbReference type="HAMAP-Rule" id="MF_00478"/>
    </source>
</evidence>
<gene>
    <name evidence="1" type="primary">rnfE</name>
    <name type="ordered locus">VP2107</name>
</gene>
<reference key="1">
    <citation type="journal article" date="2003" name="Lancet">
        <title>Genome sequence of Vibrio parahaemolyticus: a pathogenic mechanism distinct from that of V. cholerae.</title>
        <authorList>
            <person name="Makino K."/>
            <person name="Oshima K."/>
            <person name="Kurokawa K."/>
            <person name="Yokoyama K."/>
            <person name="Uda T."/>
            <person name="Tagomori K."/>
            <person name="Iijima Y."/>
            <person name="Najima M."/>
            <person name="Nakano M."/>
            <person name="Yamashita A."/>
            <person name="Kubota Y."/>
            <person name="Kimura S."/>
            <person name="Yasunaga T."/>
            <person name="Honda T."/>
            <person name="Shinagawa H."/>
            <person name="Hattori M."/>
            <person name="Iida T."/>
        </authorList>
    </citation>
    <scope>NUCLEOTIDE SEQUENCE [LARGE SCALE GENOMIC DNA]</scope>
    <source>
        <strain>RIMD 2210633</strain>
    </source>
</reference>
<protein>
    <recommendedName>
        <fullName evidence="1">Ion-translocating oxidoreductase complex subunit E</fullName>
        <ecNumber evidence="1">7.-.-.-</ecNumber>
    </recommendedName>
    <alternativeName>
        <fullName evidence="1">Rnf electron transport complex subunit E</fullName>
    </alternativeName>
</protein>